<name>NUOI_RICRS</name>
<keyword id="KW-0004">4Fe-4S</keyword>
<keyword id="KW-0997">Cell inner membrane</keyword>
<keyword id="KW-1003">Cell membrane</keyword>
<keyword id="KW-0408">Iron</keyword>
<keyword id="KW-0411">Iron-sulfur</keyword>
<keyword id="KW-0472">Membrane</keyword>
<keyword id="KW-0479">Metal-binding</keyword>
<keyword id="KW-0520">NAD</keyword>
<keyword id="KW-0874">Quinone</keyword>
<keyword id="KW-0677">Repeat</keyword>
<keyword id="KW-1278">Translocase</keyword>
<keyword id="KW-0830">Ubiquinone</keyword>
<feature type="chain" id="PRO_1000143669" description="NADH-quinone oxidoreductase subunit I">
    <location>
        <begin position="1"/>
        <end position="159"/>
    </location>
</feature>
<feature type="domain" description="4Fe-4S ferredoxin-type 1" evidence="1">
    <location>
        <begin position="51"/>
        <end position="80"/>
    </location>
</feature>
<feature type="domain" description="4Fe-4S ferredoxin-type 2" evidence="1">
    <location>
        <begin position="90"/>
        <end position="119"/>
    </location>
</feature>
<feature type="binding site" evidence="1">
    <location>
        <position position="60"/>
    </location>
    <ligand>
        <name>[4Fe-4S] cluster</name>
        <dbReference type="ChEBI" id="CHEBI:49883"/>
        <label>1</label>
    </ligand>
</feature>
<feature type="binding site" evidence="1">
    <location>
        <position position="63"/>
    </location>
    <ligand>
        <name>[4Fe-4S] cluster</name>
        <dbReference type="ChEBI" id="CHEBI:49883"/>
        <label>1</label>
    </ligand>
</feature>
<feature type="binding site" evidence="1">
    <location>
        <position position="66"/>
    </location>
    <ligand>
        <name>[4Fe-4S] cluster</name>
        <dbReference type="ChEBI" id="CHEBI:49883"/>
        <label>1</label>
    </ligand>
</feature>
<feature type="binding site" evidence="1">
    <location>
        <position position="70"/>
    </location>
    <ligand>
        <name>[4Fe-4S] cluster</name>
        <dbReference type="ChEBI" id="CHEBI:49883"/>
        <label>2</label>
    </ligand>
</feature>
<feature type="binding site" evidence="1">
    <location>
        <position position="99"/>
    </location>
    <ligand>
        <name>[4Fe-4S] cluster</name>
        <dbReference type="ChEBI" id="CHEBI:49883"/>
        <label>2</label>
    </ligand>
</feature>
<feature type="binding site" evidence="1">
    <location>
        <position position="102"/>
    </location>
    <ligand>
        <name>[4Fe-4S] cluster</name>
        <dbReference type="ChEBI" id="CHEBI:49883"/>
        <label>2</label>
    </ligand>
</feature>
<feature type="binding site" evidence="1">
    <location>
        <position position="105"/>
    </location>
    <ligand>
        <name>[4Fe-4S] cluster</name>
        <dbReference type="ChEBI" id="CHEBI:49883"/>
        <label>2</label>
    </ligand>
</feature>
<feature type="binding site" evidence="1">
    <location>
        <position position="109"/>
    </location>
    <ligand>
        <name>[4Fe-4S] cluster</name>
        <dbReference type="ChEBI" id="CHEBI:49883"/>
        <label>1</label>
    </ligand>
</feature>
<proteinExistence type="inferred from homology"/>
<evidence type="ECO:0000255" key="1">
    <source>
        <dbReference type="HAMAP-Rule" id="MF_01351"/>
    </source>
</evidence>
<accession>A8GTS0</accession>
<protein>
    <recommendedName>
        <fullName evidence="1">NADH-quinone oxidoreductase subunit I</fullName>
        <ecNumber evidence="1">7.1.1.-</ecNumber>
    </recommendedName>
    <alternativeName>
        <fullName evidence="1">NADH dehydrogenase I subunit I</fullName>
    </alternativeName>
    <alternativeName>
        <fullName evidence="1">NDH-1 subunit I</fullName>
    </alternativeName>
</protein>
<dbReference type="EC" id="7.1.1.-" evidence="1"/>
<dbReference type="EMBL" id="CP000848">
    <property type="protein sequence ID" value="ABV76795.1"/>
    <property type="molecule type" value="Genomic_DNA"/>
</dbReference>
<dbReference type="RefSeq" id="WP_012151338.1">
    <property type="nucleotide sequence ID" value="NZ_CP121767.1"/>
</dbReference>
<dbReference type="SMR" id="A8GTS0"/>
<dbReference type="GeneID" id="79937839"/>
<dbReference type="KEGG" id="rri:A1G_06730"/>
<dbReference type="HOGENOM" id="CLU_067218_5_1_5"/>
<dbReference type="Proteomes" id="UP000006832">
    <property type="component" value="Chromosome"/>
</dbReference>
<dbReference type="GO" id="GO:0005886">
    <property type="term" value="C:plasma membrane"/>
    <property type="evidence" value="ECO:0007669"/>
    <property type="project" value="UniProtKB-SubCell"/>
</dbReference>
<dbReference type="GO" id="GO:0051539">
    <property type="term" value="F:4 iron, 4 sulfur cluster binding"/>
    <property type="evidence" value="ECO:0007669"/>
    <property type="project" value="UniProtKB-KW"/>
</dbReference>
<dbReference type="GO" id="GO:0005506">
    <property type="term" value="F:iron ion binding"/>
    <property type="evidence" value="ECO:0007669"/>
    <property type="project" value="UniProtKB-UniRule"/>
</dbReference>
<dbReference type="GO" id="GO:0050136">
    <property type="term" value="F:NADH:ubiquinone reductase (non-electrogenic) activity"/>
    <property type="evidence" value="ECO:0007669"/>
    <property type="project" value="UniProtKB-UniRule"/>
</dbReference>
<dbReference type="GO" id="GO:0048038">
    <property type="term" value="F:quinone binding"/>
    <property type="evidence" value="ECO:0007669"/>
    <property type="project" value="UniProtKB-KW"/>
</dbReference>
<dbReference type="GO" id="GO:0009060">
    <property type="term" value="P:aerobic respiration"/>
    <property type="evidence" value="ECO:0007669"/>
    <property type="project" value="TreeGrafter"/>
</dbReference>
<dbReference type="FunFam" id="3.30.70.3270:FF:000001">
    <property type="entry name" value="NADH-quinone oxidoreductase subunit I 1"/>
    <property type="match status" value="1"/>
</dbReference>
<dbReference type="Gene3D" id="3.30.70.3270">
    <property type="match status" value="1"/>
</dbReference>
<dbReference type="HAMAP" id="MF_01351">
    <property type="entry name" value="NDH1_NuoI"/>
    <property type="match status" value="1"/>
</dbReference>
<dbReference type="InterPro" id="IPR017896">
    <property type="entry name" value="4Fe4S_Fe-S-bd"/>
</dbReference>
<dbReference type="InterPro" id="IPR017900">
    <property type="entry name" value="4Fe4S_Fe_S_CS"/>
</dbReference>
<dbReference type="InterPro" id="IPR010226">
    <property type="entry name" value="NADH_quinone_OxRdtase_chainI"/>
</dbReference>
<dbReference type="NCBIfam" id="TIGR01971">
    <property type="entry name" value="NuoI"/>
    <property type="match status" value="1"/>
</dbReference>
<dbReference type="NCBIfam" id="NF004538">
    <property type="entry name" value="PRK05888.1-4"/>
    <property type="match status" value="1"/>
</dbReference>
<dbReference type="NCBIfam" id="NF004539">
    <property type="entry name" value="PRK05888.1-5"/>
    <property type="match status" value="1"/>
</dbReference>
<dbReference type="PANTHER" id="PTHR10849:SF20">
    <property type="entry name" value="NADH DEHYDROGENASE [UBIQUINONE] IRON-SULFUR PROTEIN 8, MITOCHONDRIAL"/>
    <property type="match status" value="1"/>
</dbReference>
<dbReference type="PANTHER" id="PTHR10849">
    <property type="entry name" value="NADH DEHYDROGENASE UBIQUINONE IRON-SULFUR PROTEIN 8, MITOCHONDRIAL"/>
    <property type="match status" value="1"/>
</dbReference>
<dbReference type="Pfam" id="PF12838">
    <property type="entry name" value="Fer4_7"/>
    <property type="match status" value="1"/>
</dbReference>
<dbReference type="SUPFAM" id="SSF54862">
    <property type="entry name" value="4Fe-4S ferredoxins"/>
    <property type="match status" value="1"/>
</dbReference>
<dbReference type="PROSITE" id="PS00198">
    <property type="entry name" value="4FE4S_FER_1"/>
    <property type="match status" value="2"/>
</dbReference>
<dbReference type="PROSITE" id="PS51379">
    <property type="entry name" value="4FE4S_FER_2"/>
    <property type="match status" value="2"/>
</dbReference>
<sequence length="159" mass="18594">MINYLKSFFLYEIVRGMALTLKYFFKPKVTINYPYEKSPISPRFKGEHALRRYEHGEERCIACKLCEAICPAQAIVIEADEREDGSRRTTRYDIDMTKCIYCGLCQEACPVDAIVEGPNFEFASLTHTALIYDKERLLQNGDRWEQALASKLHKDYEYR</sequence>
<gene>
    <name evidence="1" type="primary">nuoI</name>
    <name type="ordered locus">A1G_06730</name>
</gene>
<comment type="function">
    <text evidence="1">NDH-1 shuttles electrons from NADH, via FMN and iron-sulfur (Fe-S) centers, to quinones in the respiratory chain. The immediate electron acceptor for the enzyme in this species is believed to be ubiquinone. Couples the redox reaction to proton translocation (for every two electrons transferred, four hydrogen ions are translocated across the cytoplasmic membrane), and thus conserves the redox energy in a proton gradient.</text>
</comment>
<comment type="catalytic activity">
    <reaction evidence="1">
        <text>a quinone + NADH + 5 H(+)(in) = a quinol + NAD(+) + 4 H(+)(out)</text>
        <dbReference type="Rhea" id="RHEA:57888"/>
        <dbReference type="ChEBI" id="CHEBI:15378"/>
        <dbReference type="ChEBI" id="CHEBI:24646"/>
        <dbReference type="ChEBI" id="CHEBI:57540"/>
        <dbReference type="ChEBI" id="CHEBI:57945"/>
        <dbReference type="ChEBI" id="CHEBI:132124"/>
    </reaction>
</comment>
<comment type="cofactor">
    <cofactor evidence="1">
        <name>[4Fe-4S] cluster</name>
        <dbReference type="ChEBI" id="CHEBI:49883"/>
    </cofactor>
    <text evidence="1">Binds 2 [4Fe-4S] clusters per subunit.</text>
</comment>
<comment type="subunit">
    <text evidence="1">NDH-1 is composed of 14 different subunits. Subunits NuoA, H, J, K, L, M, N constitute the membrane sector of the complex.</text>
</comment>
<comment type="subcellular location">
    <subcellularLocation>
        <location evidence="1">Cell inner membrane</location>
        <topology evidence="1">Peripheral membrane protein</topology>
    </subcellularLocation>
</comment>
<comment type="similarity">
    <text evidence="1">Belongs to the complex I 23 kDa subunit family.</text>
</comment>
<organism>
    <name type="scientific">Rickettsia rickettsii (strain Sheila Smith)</name>
    <dbReference type="NCBI Taxonomy" id="392021"/>
    <lineage>
        <taxon>Bacteria</taxon>
        <taxon>Pseudomonadati</taxon>
        <taxon>Pseudomonadota</taxon>
        <taxon>Alphaproteobacteria</taxon>
        <taxon>Rickettsiales</taxon>
        <taxon>Rickettsiaceae</taxon>
        <taxon>Rickettsieae</taxon>
        <taxon>Rickettsia</taxon>
        <taxon>spotted fever group</taxon>
    </lineage>
</organism>
<reference key="1">
    <citation type="submission" date="2007-09" db="EMBL/GenBank/DDBJ databases">
        <title>Complete genome sequence of Rickettsia rickettsii.</title>
        <authorList>
            <person name="Madan A."/>
            <person name="Fahey J."/>
            <person name="Helton E."/>
            <person name="Ketteman M."/>
            <person name="Madan A."/>
            <person name="Rodrigues S."/>
            <person name="Sanchez A."/>
            <person name="Dasch G."/>
            <person name="Eremeeva M."/>
        </authorList>
    </citation>
    <scope>NUCLEOTIDE SEQUENCE [LARGE SCALE GENOMIC DNA]</scope>
    <source>
        <strain>Sheila Smith</strain>
    </source>
</reference>